<gene>
    <name type="primary">Nherf1</name>
    <name type="synonym">Nherf</name>
    <name type="synonym">Slc9a3r1</name>
</gene>
<proteinExistence type="evidence at protein level"/>
<reference key="1">
    <citation type="journal article" date="1999" name="Biochim. Biophys. Acta">
        <title>Molecular cloning of the cDNA and promoter sequences for the mouse sodium-hydrogen exchanger regulatory factor.</title>
        <authorList>
            <person name="Weinman E.J."/>
            <person name="Steplock D."/>
            <person name="Zhang X."/>
            <person name="Akhter S."/>
            <person name="Shenolikar S."/>
        </authorList>
    </citation>
    <scope>NUCLEOTIDE SEQUENCE [MRNA] (ISOFORM 1)</scope>
    <source>
        <strain>C57BL/6J</strain>
        <tissue>Kidney</tissue>
    </source>
</reference>
<reference key="2">
    <citation type="journal article" date="2005" name="Science">
        <title>The transcriptional landscape of the mammalian genome.</title>
        <authorList>
            <person name="Carninci P."/>
            <person name="Kasukawa T."/>
            <person name="Katayama S."/>
            <person name="Gough J."/>
            <person name="Frith M.C."/>
            <person name="Maeda N."/>
            <person name="Oyama R."/>
            <person name="Ravasi T."/>
            <person name="Lenhard B."/>
            <person name="Wells C."/>
            <person name="Kodzius R."/>
            <person name="Shimokawa K."/>
            <person name="Bajic V.B."/>
            <person name="Brenner S.E."/>
            <person name="Batalov S."/>
            <person name="Forrest A.R."/>
            <person name="Zavolan M."/>
            <person name="Davis M.J."/>
            <person name="Wilming L.G."/>
            <person name="Aidinis V."/>
            <person name="Allen J.E."/>
            <person name="Ambesi-Impiombato A."/>
            <person name="Apweiler R."/>
            <person name="Aturaliya R.N."/>
            <person name="Bailey T.L."/>
            <person name="Bansal M."/>
            <person name="Baxter L."/>
            <person name="Beisel K.W."/>
            <person name="Bersano T."/>
            <person name="Bono H."/>
            <person name="Chalk A.M."/>
            <person name="Chiu K.P."/>
            <person name="Choudhary V."/>
            <person name="Christoffels A."/>
            <person name="Clutterbuck D.R."/>
            <person name="Crowe M.L."/>
            <person name="Dalla E."/>
            <person name="Dalrymple B.P."/>
            <person name="de Bono B."/>
            <person name="Della Gatta G."/>
            <person name="di Bernardo D."/>
            <person name="Down T."/>
            <person name="Engstrom P."/>
            <person name="Fagiolini M."/>
            <person name="Faulkner G."/>
            <person name="Fletcher C.F."/>
            <person name="Fukushima T."/>
            <person name="Furuno M."/>
            <person name="Futaki S."/>
            <person name="Gariboldi M."/>
            <person name="Georgii-Hemming P."/>
            <person name="Gingeras T.R."/>
            <person name="Gojobori T."/>
            <person name="Green R.E."/>
            <person name="Gustincich S."/>
            <person name="Harbers M."/>
            <person name="Hayashi Y."/>
            <person name="Hensch T.K."/>
            <person name="Hirokawa N."/>
            <person name="Hill D."/>
            <person name="Huminiecki L."/>
            <person name="Iacono M."/>
            <person name="Ikeo K."/>
            <person name="Iwama A."/>
            <person name="Ishikawa T."/>
            <person name="Jakt M."/>
            <person name="Kanapin A."/>
            <person name="Katoh M."/>
            <person name="Kawasawa Y."/>
            <person name="Kelso J."/>
            <person name="Kitamura H."/>
            <person name="Kitano H."/>
            <person name="Kollias G."/>
            <person name="Krishnan S.P."/>
            <person name="Kruger A."/>
            <person name="Kummerfeld S.K."/>
            <person name="Kurochkin I.V."/>
            <person name="Lareau L.F."/>
            <person name="Lazarevic D."/>
            <person name="Lipovich L."/>
            <person name="Liu J."/>
            <person name="Liuni S."/>
            <person name="McWilliam S."/>
            <person name="Madan Babu M."/>
            <person name="Madera M."/>
            <person name="Marchionni L."/>
            <person name="Matsuda H."/>
            <person name="Matsuzawa S."/>
            <person name="Miki H."/>
            <person name="Mignone F."/>
            <person name="Miyake S."/>
            <person name="Morris K."/>
            <person name="Mottagui-Tabar S."/>
            <person name="Mulder N."/>
            <person name="Nakano N."/>
            <person name="Nakauchi H."/>
            <person name="Ng P."/>
            <person name="Nilsson R."/>
            <person name="Nishiguchi S."/>
            <person name="Nishikawa S."/>
            <person name="Nori F."/>
            <person name="Ohara O."/>
            <person name="Okazaki Y."/>
            <person name="Orlando V."/>
            <person name="Pang K.C."/>
            <person name="Pavan W.J."/>
            <person name="Pavesi G."/>
            <person name="Pesole G."/>
            <person name="Petrovsky N."/>
            <person name="Piazza S."/>
            <person name="Reed J."/>
            <person name="Reid J.F."/>
            <person name="Ring B.Z."/>
            <person name="Ringwald M."/>
            <person name="Rost B."/>
            <person name="Ruan Y."/>
            <person name="Salzberg S.L."/>
            <person name="Sandelin A."/>
            <person name="Schneider C."/>
            <person name="Schoenbach C."/>
            <person name="Sekiguchi K."/>
            <person name="Semple C.A."/>
            <person name="Seno S."/>
            <person name="Sessa L."/>
            <person name="Sheng Y."/>
            <person name="Shibata Y."/>
            <person name="Shimada H."/>
            <person name="Shimada K."/>
            <person name="Silva D."/>
            <person name="Sinclair B."/>
            <person name="Sperling S."/>
            <person name="Stupka E."/>
            <person name="Sugiura K."/>
            <person name="Sultana R."/>
            <person name="Takenaka Y."/>
            <person name="Taki K."/>
            <person name="Tammoja K."/>
            <person name="Tan S.L."/>
            <person name="Tang S."/>
            <person name="Taylor M.S."/>
            <person name="Tegner J."/>
            <person name="Teichmann S.A."/>
            <person name="Ueda H.R."/>
            <person name="van Nimwegen E."/>
            <person name="Verardo R."/>
            <person name="Wei C.L."/>
            <person name="Yagi K."/>
            <person name="Yamanishi H."/>
            <person name="Zabarovsky E."/>
            <person name="Zhu S."/>
            <person name="Zimmer A."/>
            <person name="Hide W."/>
            <person name="Bult C."/>
            <person name="Grimmond S.M."/>
            <person name="Teasdale R.D."/>
            <person name="Liu E.T."/>
            <person name="Brusic V."/>
            <person name="Quackenbush J."/>
            <person name="Wahlestedt C."/>
            <person name="Mattick J.S."/>
            <person name="Hume D.A."/>
            <person name="Kai C."/>
            <person name="Sasaki D."/>
            <person name="Tomaru Y."/>
            <person name="Fukuda S."/>
            <person name="Kanamori-Katayama M."/>
            <person name="Suzuki M."/>
            <person name="Aoki J."/>
            <person name="Arakawa T."/>
            <person name="Iida J."/>
            <person name="Imamura K."/>
            <person name="Itoh M."/>
            <person name="Kato T."/>
            <person name="Kawaji H."/>
            <person name="Kawagashira N."/>
            <person name="Kawashima T."/>
            <person name="Kojima M."/>
            <person name="Kondo S."/>
            <person name="Konno H."/>
            <person name="Nakano K."/>
            <person name="Ninomiya N."/>
            <person name="Nishio T."/>
            <person name="Okada M."/>
            <person name="Plessy C."/>
            <person name="Shibata K."/>
            <person name="Shiraki T."/>
            <person name="Suzuki S."/>
            <person name="Tagami M."/>
            <person name="Waki K."/>
            <person name="Watahiki A."/>
            <person name="Okamura-Oho Y."/>
            <person name="Suzuki H."/>
            <person name="Kawai J."/>
            <person name="Hayashizaki Y."/>
        </authorList>
    </citation>
    <scope>NUCLEOTIDE SEQUENCE [LARGE SCALE MRNA] (ISOFORM 2)</scope>
    <source>
        <strain>C57BL/6J</strain>
        <tissue>Thymus</tissue>
    </source>
</reference>
<reference key="3">
    <citation type="journal article" date="2004" name="Genome Res.">
        <title>The status, quality, and expansion of the NIH full-length cDNA project: the Mammalian Gene Collection (MGC).</title>
        <authorList>
            <consortium name="The MGC Project Team"/>
        </authorList>
    </citation>
    <scope>NUCLEOTIDE SEQUENCE [LARGE SCALE MRNA] (ISOFORM 1)</scope>
    <source>
        <strain>C57BL/6J</strain>
        <tissue>Brain</tissue>
    </source>
</reference>
<reference key="4">
    <citation type="journal article" date="1998" name="Nature">
        <title>The beta2-adrenergic receptor interacts with the Na+/H+-exchanger regulatory factor to control Na+/H+ exchange.</title>
        <authorList>
            <person name="Hall R.A."/>
            <person name="Premont R.T."/>
            <person name="Chow C.-W."/>
            <person name="Blitzer J.T."/>
            <person name="Pitcher J.A."/>
            <person name="Claing A."/>
            <person name="Stoffel R.H."/>
            <person name="Barak L.S."/>
            <person name="Shenolikar S."/>
            <person name="Weinman E.J."/>
            <person name="Grinstein S."/>
            <person name="Lefkowitz R.J."/>
        </authorList>
    </citation>
    <scope>FUNCTION</scope>
    <scope>INTERACTION WITH ADRB2</scope>
</reference>
<reference key="5">
    <citation type="journal article" date="2002" name="J. Immunol.">
        <title>Negative regulation of immune synapse formation by anchoring lipid raft to cytoskeleton through Cbp-EBP50-ERM assembly.</title>
        <authorList>
            <person name="Itoh K."/>
            <person name="Sakakibara M."/>
            <person name="Yamasaki S."/>
            <person name="Takeuchi A."/>
            <person name="Arase H."/>
            <person name="Miyazaki M."/>
            <person name="Nakajima N."/>
            <person name="Okada M."/>
            <person name="Saito T."/>
        </authorList>
    </citation>
    <scope>INTERACTION WITH PAG1</scope>
    <scope>IDENTIFICATION IN A COMPLEX WITH PAG1 AND MSN</scope>
</reference>
<reference key="6">
    <citation type="journal article" date="2003" name="Kidney Int.">
        <title>PDZK1: I. a major scaffolder in brush borders of proximal tubular cells.</title>
        <authorList>
            <person name="Gisler S.M."/>
            <person name="Pribanic S."/>
            <person name="Bacic D."/>
            <person name="Forrer P."/>
            <person name="Gantenbein A."/>
            <person name="Sabourin L.A."/>
            <person name="Tsuji A."/>
            <person name="Zhao Z.-S."/>
            <person name="Manser E."/>
            <person name="Biber J."/>
            <person name="Murer H."/>
        </authorList>
    </citation>
    <scope>INTERACTION WITH PDZK1</scope>
</reference>
<reference key="7">
    <citation type="journal article" date="2004" name="J. Cell Sci.">
        <title>New sorting nexin (SNX27) and NHERF specifically interact with the 5-HT4a receptor splice variant: roles in receptor targeting.</title>
        <authorList>
            <person name="Joubert L."/>
            <person name="Hanson B."/>
            <person name="Barthet G."/>
            <person name="Sebben M."/>
            <person name="Claeysen S."/>
            <person name="Hong W."/>
            <person name="Marin P."/>
            <person name="Dumuis A."/>
            <person name="Bockaert J."/>
        </authorList>
    </citation>
    <scope>INTERACTION WITH HTR4</scope>
</reference>
<reference key="8">
    <citation type="journal article" date="2004" name="Rapid Commun. Mass Spectrom.">
        <title>Phosphoproteome analysis of mouse liver using immobilized metal affinity purification and linear ion trap mass spectrometry.</title>
        <authorList>
            <person name="Jin W.-H."/>
            <person name="Dai J."/>
            <person name="Zhou H."/>
            <person name="Xia Q.-C."/>
            <person name="Zou H.-F."/>
            <person name="Zeng R."/>
        </authorList>
    </citation>
    <scope>PHOSPHORYLATION AT SER-286</scope>
</reference>
<reference key="9">
    <citation type="journal article" date="2007" name="PLoS ONE">
        <title>The CD34-related molecule podocalyxin is a potent inducer of microvillus formation.</title>
        <authorList>
            <person name="Nielsen J.S."/>
            <person name="Graves M.L."/>
            <person name="Chelliah S."/>
            <person name="Vogl A.W."/>
            <person name="Roskelley C.D."/>
            <person name="McNagny K.M."/>
        </authorList>
    </citation>
    <scope>SUBCELLULAR LOCATION</scope>
</reference>
<reference key="10">
    <citation type="journal article" date="2007" name="Proc. Natl. Acad. Sci. U.S.A.">
        <title>Large-scale phosphorylation analysis of mouse liver.</title>
        <authorList>
            <person name="Villen J."/>
            <person name="Beausoleil S.A."/>
            <person name="Gerber S.A."/>
            <person name="Gygi S.P."/>
        </authorList>
    </citation>
    <scope>PHOSPHORYLATION [LARGE SCALE ANALYSIS] AT SER-289 AND SER-297</scope>
    <scope>IDENTIFICATION BY MASS SPECTROMETRY [LARGE SCALE ANALYSIS]</scope>
    <source>
        <tissue>Liver</tissue>
    </source>
</reference>
<reference key="11">
    <citation type="journal article" date="2008" name="J. Proteome Res.">
        <title>Specific phosphopeptide enrichment with immobilized titanium ion affinity chromatography adsorbent for phosphoproteome analysis.</title>
        <authorList>
            <person name="Zhou H."/>
            <person name="Ye M."/>
            <person name="Dong J."/>
            <person name="Han G."/>
            <person name="Jiang X."/>
            <person name="Wu R."/>
            <person name="Zou H."/>
        </authorList>
    </citation>
    <scope>IDENTIFICATION BY MASS SPECTROMETRY [LARGE SCALE ANALYSIS]</scope>
    <source>
        <tissue>Liver</tissue>
    </source>
</reference>
<reference key="12">
    <citation type="journal article" date="2009" name="Mol. Cell. Proteomics">
        <title>Large scale localization of protein phosphorylation by use of electron capture dissociation mass spectrometry.</title>
        <authorList>
            <person name="Sweet S.M."/>
            <person name="Bailey C.M."/>
            <person name="Cunningham D.L."/>
            <person name="Heath J.K."/>
            <person name="Cooper H.J."/>
        </authorList>
    </citation>
    <scope>IDENTIFICATION BY MASS SPECTROMETRY [LARGE SCALE ANALYSIS]</scope>
    <source>
        <tissue>Embryonic fibroblast</tissue>
    </source>
</reference>
<reference key="13">
    <citation type="journal article" date="2010" name="Cell">
        <title>A tissue-specific atlas of mouse protein phosphorylation and expression.</title>
        <authorList>
            <person name="Huttlin E.L."/>
            <person name="Jedrychowski M.P."/>
            <person name="Elias J.E."/>
            <person name="Goswami T."/>
            <person name="Rad R."/>
            <person name="Beausoleil S.A."/>
            <person name="Villen J."/>
            <person name="Haas W."/>
            <person name="Sowa M.E."/>
            <person name="Gygi S.P."/>
        </authorList>
    </citation>
    <scope>PHOSPHORYLATION [LARGE SCALE ANALYSIS] AT SER-286; THR-288; SER-289; SER-294 AND SER-297</scope>
    <scope>IDENTIFICATION BY MASS SPECTROMETRY [LARGE SCALE ANALYSIS]</scope>
    <source>
        <tissue>Brain</tissue>
        <tissue>Brown adipose tissue</tissue>
        <tissue>Heart</tissue>
        <tissue>Kidney</tissue>
        <tissue>Liver</tissue>
        <tissue>Lung</tissue>
        <tissue>Pancreas</tissue>
        <tissue>Spleen</tissue>
        <tissue>Testis</tissue>
    </source>
</reference>
<reference key="14">
    <citation type="journal article" date="2012" name="Biol. Reprod.">
        <title>Participation of the Cl-/HCO(3)- exchangers SLC26A3 and SLC26A6, the Cl- channel CFTR, and the regulatory factor SLC9A3R1 in mouse sperm capacitation.</title>
        <authorList>
            <person name="Chavez J.C."/>
            <person name="Hernandez-Gonzalez E.O."/>
            <person name="Wertheimer E."/>
            <person name="Visconti P.E."/>
            <person name="Darszon A."/>
            <person name="Trevino C.L."/>
        </authorList>
    </citation>
    <scope>FUNCTION</scope>
    <scope>INTERACTION WITH CFTR; SLC26A3 AND SLC26A6</scope>
    <scope>SUBCELLULAR LOCATION</scope>
    <scope>TISSUE SPECIFICITY</scope>
</reference>
<keyword id="KW-0007">Acetylation</keyword>
<keyword id="KW-0025">Alternative splicing</keyword>
<keyword id="KW-1003">Cell membrane</keyword>
<keyword id="KW-0966">Cell projection</keyword>
<keyword id="KW-0963">Cytoplasm</keyword>
<keyword id="KW-0472">Membrane</keyword>
<keyword id="KW-0597">Phosphoprotein</keyword>
<keyword id="KW-1185">Reference proteome</keyword>
<keyword id="KW-0677">Repeat</keyword>
<keyword id="KW-0879">Wnt signaling pathway</keyword>
<evidence type="ECO:0000250" key="1"/>
<evidence type="ECO:0000250" key="2">
    <source>
        <dbReference type="UniProtKB" id="O14745"/>
    </source>
</evidence>
<evidence type="ECO:0000250" key="3">
    <source>
        <dbReference type="UniProtKB" id="Q28619"/>
    </source>
</evidence>
<evidence type="ECO:0000255" key="4">
    <source>
        <dbReference type="PROSITE-ProRule" id="PRU00143"/>
    </source>
</evidence>
<evidence type="ECO:0000256" key="5">
    <source>
        <dbReference type="SAM" id="MobiDB-lite"/>
    </source>
</evidence>
<evidence type="ECO:0000269" key="6">
    <source>
    </source>
</evidence>
<evidence type="ECO:0000269" key="7">
    <source>
    </source>
</evidence>
<evidence type="ECO:0000269" key="8">
    <source>
    </source>
</evidence>
<evidence type="ECO:0000269" key="9">
    <source>
    </source>
</evidence>
<evidence type="ECO:0000269" key="10">
    <source>
    </source>
</evidence>
<evidence type="ECO:0000269" key="11">
    <source>
    </source>
</evidence>
<evidence type="ECO:0000303" key="12">
    <source>
    </source>
</evidence>
<evidence type="ECO:0007744" key="13">
    <source>
    </source>
</evidence>
<evidence type="ECO:0007744" key="14">
    <source>
    </source>
</evidence>
<protein>
    <recommendedName>
        <fullName>Na(+)/H(+) exchange regulatory cofactor NHE-RF1</fullName>
        <shortName>NHERF-1</shortName>
    </recommendedName>
    <alternativeName>
        <fullName>Ezrin-radixin-moesin-binding phosphoprotein 50</fullName>
        <shortName>EBP50</shortName>
    </alternativeName>
    <alternativeName>
        <fullName>Regulatory cofactor of Na(+)/H(+) exchanger</fullName>
    </alternativeName>
    <alternativeName>
        <fullName>Sodium-hydrogen exchanger regulatory factor 1</fullName>
    </alternativeName>
    <alternativeName>
        <fullName>Solute carrier family 9 isoform A3 regulatory factor 1</fullName>
    </alternativeName>
</protein>
<accession>P70441</accession>
<accession>Q8BYD8</accession>
<dbReference type="EMBL" id="U74079">
    <property type="protein sequence ID" value="AAB17569.1"/>
    <property type="molecule type" value="mRNA"/>
</dbReference>
<dbReference type="EMBL" id="AK040371">
    <property type="protein sequence ID" value="BAC30573.2"/>
    <property type="molecule type" value="mRNA"/>
</dbReference>
<dbReference type="EMBL" id="BC085141">
    <property type="protein sequence ID" value="AAH85141.1"/>
    <property type="molecule type" value="mRNA"/>
</dbReference>
<dbReference type="CCDS" id="CCDS36370.1">
    <molecule id="P70441-1"/>
</dbReference>
<dbReference type="RefSeq" id="NP_036160.1">
    <molecule id="P70441-1"/>
    <property type="nucleotide sequence ID" value="NM_012030.2"/>
</dbReference>
<dbReference type="SMR" id="P70441"/>
<dbReference type="BioGRID" id="205077">
    <property type="interactions" value="28"/>
</dbReference>
<dbReference type="CORUM" id="P70441"/>
<dbReference type="FunCoup" id="P70441">
    <property type="interactions" value="718"/>
</dbReference>
<dbReference type="IntAct" id="P70441">
    <property type="interactions" value="10"/>
</dbReference>
<dbReference type="MINT" id="P70441"/>
<dbReference type="STRING" id="10090.ENSMUSP00000021077"/>
<dbReference type="GlyGen" id="P70441">
    <property type="glycosylation" value="1 site, 1 O-linked glycan (1 site)"/>
</dbReference>
<dbReference type="iPTMnet" id="P70441"/>
<dbReference type="PhosphoSitePlus" id="P70441"/>
<dbReference type="SwissPalm" id="P70441"/>
<dbReference type="jPOST" id="P70441"/>
<dbReference type="PaxDb" id="10090-ENSMUSP00000021077"/>
<dbReference type="PeptideAtlas" id="P70441"/>
<dbReference type="ProteomicsDB" id="287423">
    <molecule id="P70441-1"/>
</dbReference>
<dbReference type="ProteomicsDB" id="287424">
    <molecule id="P70441-2"/>
</dbReference>
<dbReference type="Pumba" id="P70441"/>
<dbReference type="Antibodypedia" id="1525">
    <property type="antibodies" value="349 antibodies from 36 providers"/>
</dbReference>
<dbReference type="DNASU" id="26941"/>
<dbReference type="Ensembl" id="ENSMUST00000021077.4">
    <molecule id="P70441-1"/>
    <property type="protein sequence ID" value="ENSMUSP00000021077.4"/>
    <property type="gene ID" value="ENSMUSG00000020733.4"/>
</dbReference>
<dbReference type="GeneID" id="26941"/>
<dbReference type="KEGG" id="mmu:26941"/>
<dbReference type="UCSC" id="uc007mgp.1">
    <molecule id="P70441-1"/>
    <property type="organism name" value="mouse"/>
</dbReference>
<dbReference type="AGR" id="MGI:1349482"/>
<dbReference type="CTD" id="9368"/>
<dbReference type="MGI" id="MGI:1349482">
    <property type="gene designation" value="Nherf1"/>
</dbReference>
<dbReference type="VEuPathDB" id="HostDB:ENSMUSG00000020733"/>
<dbReference type="eggNOG" id="KOG3528">
    <property type="taxonomic scope" value="Eukaryota"/>
</dbReference>
<dbReference type="GeneTree" id="ENSGT00950000182849"/>
<dbReference type="HOGENOM" id="CLU_038627_1_0_1"/>
<dbReference type="InParanoid" id="P70441"/>
<dbReference type="OMA" id="KHNMKCL"/>
<dbReference type="OrthoDB" id="10007415at2759"/>
<dbReference type="PhylomeDB" id="P70441"/>
<dbReference type="TreeFam" id="TF350449"/>
<dbReference type="BioGRID-ORCS" id="26941">
    <property type="hits" value="1 hit in 80 CRISPR screens"/>
</dbReference>
<dbReference type="PRO" id="PR:P70441"/>
<dbReference type="Proteomes" id="UP000000589">
    <property type="component" value="Chromosome 11"/>
</dbReference>
<dbReference type="RNAct" id="P70441">
    <property type="molecule type" value="protein"/>
</dbReference>
<dbReference type="Bgee" id="ENSMUSG00000020733">
    <property type="expression patterns" value="Expressed in small intestine Peyer's patch and 292 other cell types or tissues"/>
</dbReference>
<dbReference type="ExpressionAtlas" id="P70441">
    <property type="expression patterns" value="baseline and differential"/>
</dbReference>
<dbReference type="GO" id="GO:0045177">
    <property type="term" value="C:apical part of cell"/>
    <property type="evidence" value="ECO:0000314"/>
    <property type="project" value="MGI"/>
</dbReference>
<dbReference type="GO" id="GO:0016324">
    <property type="term" value="C:apical plasma membrane"/>
    <property type="evidence" value="ECO:0000314"/>
    <property type="project" value="ARUK-UCL"/>
</dbReference>
<dbReference type="GO" id="GO:0031526">
    <property type="term" value="C:brush border membrane"/>
    <property type="evidence" value="ECO:0000314"/>
    <property type="project" value="MGI"/>
</dbReference>
<dbReference type="GO" id="GO:0005737">
    <property type="term" value="C:cytoplasm"/>
    <property type="evidence" value="ECO:0000250"/>
    <property type="project" value="UniProtKB"/>
</dbReference>
<dbReference type="GO" id="GO:0012505">
    <property type="term" value="C:endomembrane system"/>
    <property type="evidence" value="ECO:0007669"/>
    <property type="project" value="UniProtKB-SubCell"/>
</dbReference>
<dbReference type="GO" id="GO:0005576">
    <property type="term" value="C:extracellular region"/>
    <property type="evidence" value="ECO:0007669"/>
    <property type="project" value="GOC"/>
</dbReference>
<dbReference type="GO" id="GO:0030175">
    <property type="term" value="C:filopodium"/>
    <property type="evidence" value="ECO:0007669"/>
    <property type="project" value="UniProtKB-SubCell"/>
</dbReference>
<dbReference type="GO" id="GO:0016020">
    <property type="term" value="C:membrane"/>
    <property type="evidence" value="ECO:0000314"/>
    <property type="project" value="UniProtKB"/>
</dbReference>
<dbReference type="GO" id="GO:0005902">
    <property type="term" value="C:microvillus"/>
    <property type="evidence" value="ECO:0000250"/>
    <property type="project" value="UniProtKB"/>
</dbReference>
<dbReference type="GO" id="GO:0031528">
    <property type="term" value="C:microvillus membrane"/>
    <property type="evidence" value="ECO:0000250"/>
    <property type="project" value="UniProtKB"/>
</dbReference>
<dbReference type="GO" id="GO:0048471">
    <property type="term" value="C:perinuclear region of cytoplasm"/>
    <property type="evidence" value="ECO:0007669"/>
    <property type="project" value="Ensembl"/>
</dbReference>
<dbReference type="GO" id="GO:0001726">
    <property type="term" value="C:ruffle"/>
    <property type="evidence" value="ECO:0007669"/>
    <property type="project" value="UniProtKB-SubCell"/>
</dbReference>
<dbReference type="GO" id="GO:0097225">
    <property type="term" value="C:sperm midpiece"/>
    <property type="evidence" value="ECO:0000314"/>
    <property type="project" value="UniProtKB"/>
</dbReference>
<dbReference type="GO" id="GO:0032420">
    <property type="term" value="C:stereocilium"/>
    <property type="evidence" value="ECO:0000314"/>
    <property type="project" value="MGI"/>
</dbReference>
<dbReference type="GO" id="GO:0032426">
    <property type="term" value="C:stereocilium tip"/>
    <property type="evidence" value="ECO:0000314"/>
    <property type="project" value="MGI"/>
</dbReference>
<dbReference type="GO" id="GO:0031698">
    <property type="term" value="F:beta-2 adrenergic receptor binding"/>
    <property type="evidence" value="ECO:0007669"/>
    <property type="project" value="Ensembl"/>
</dbReference>
<dbReference type="GO" id="GO:0008013">
    <property type="term" value="F:beta-catenin binding"/>
    <property type="evidence" value="ECO:0007669"/>
    <property type="project" value="Ensembl"/>
</dbReference>
<dbReference type="GO" id="GO:0099103">
    <property type="term" value="F:channel activator activity"/>
    <property type="evidence" value="ECO:0007669"/>
    <property type="project" value="Ensembl"/>
</dbReference>
<dbReference type="GO" id="GO:0017081">
    <property type="term" value="F:chloride channel regulator activity"/>
    <property type="evidence" value="ECO:0000250"/>
    <property type="project" value="UniProtKB"/>
</dbReference>
<dbReference type="GO" id="GO:0050780">
    <property type="term" value="F:dopamine receptor binding"/>
    <property type="evidence" value="ECO:0000314"/>
    <property type="project" value="MGI"/>
</dbReference>
<dbReference type="GO" id="GO:0070851">
    <property type="term" value="F:growth factor receptor binding"/>
    <property type="evidence" value="ECO:0007669"/>
    <property type="project" value="Ensembl"/>
</dbReference>
<dbReference type="GO" id="GO:0042802">
    <property type="term" value="F:identical protein binding"/>
    <property type="evidence" value="ECO:0007669"/>
    <property type="project" value="Ensembl"/>
</dbReference>
<dbReference type="GO" id="GO:0060090">
    <property type="term" value="F:molecular adaptor activity"/>
    <property type="evidence" value="ECO:0007669"/>
    <property type="project" value="InterPro"/>
</dbReference>
<dbReference type="GO" id="GO:0030165">
    <property type="term" value="F:PDZ domain binding"/>
    <property type="evidence" value="ECO:0007669"/>
    <property type="project" value="Ensembl"/>
</dbReference>
<dbReference type="GO" id="GO:0019902">
    <property type="term" value="F:phosphatase binding"/>
    <property type="evidence" value="ECO:0000353"/>
    <property type="project" value="UniProtKB"/>
</dbReference>
<dbReference type="GO" id="GO:0031799">
    <property type="term" value="F:type 2 metabotropic glutamate receptor binding"/>
    <property type="evidence" value="ECO:0007669"/>
    <property type="project" value="Ensembl"/>
</dbReference>
<dbReference type="GO" id="GO:0031800">
    <property type="term" value="F:type 3 metabotropic glutamate receptor binding"/>
    <property type="evidence" value="ECO:0007669"/>
    <property type="project" value="Ensembl"/>
</dbReference>
<dbReference type="GO" id="GO:0030036">
    <property type="term" value="P:actin cytoskeleton organization"/>
    <property type="evidence" value="ECO:0000315"/>
    <property type="project" value="MGI"/>
</dbReference>
<dbReference type="GO" id="GO:0007191">
    <property type="term" value="P:adenylate cyclase-activating dopamine receptor signaling pathway"/>
    <property type="evidence" value="ECO:0000315"/>
    <property type="project" value="MGI"/>
</dbReference>
<dbReference type="GO" id="GO:0060088">
    <property type="term" value="P:auditory receptor cell stereocilium organization"/>
    <property type="evidence" value="ECO:0000315"/>
    <property type="project" value="MGI"/>
</dbReference>
<dbReference type="GO" id="GO:0032782">
    <property type="term" value="P:bile acid secretion"/>
    <property type="evidence" value="ECO:0000315"/>
    <property type="project" value="UniProtKB"/>
</dbReference>
<dbReference type="GO" id="GO:0090660">
    <property type="term" value="P:cerebrospinal fluid circulation"/>
    <property type="evidence" value="ECO:0000314"/>
    <property type="project" value="ARUK-UCL"/>
</dbReference>
<dbReference type="GO" id="GO:0044782">
    <property type="term" value="P:cilium organization"/>
    <property type="evidence" value="ECO:0000315"/>
    <property type="project" value="ARUK-UCL"/>
</dbReference>
<dbReference type="GO" id="GO:0045198">
    <property type="term" value="P:establishment of epithelial cell apical/basal polarity"/>
    <property type="evidence" value="ECO:0007669"/>
    <property type="project" value="Ensembl"/>
</dbReference>
<dbReference type="GO" id="GO:0051683">
    <property type="term" value="P:establishment of Golgi localization"/>
    <property type="evidence" value="ECO:0007669"/>
    <property type="project" value="Ensembl"/>
</dbReference>
<dbReference type="GO" id="GO:0051649">
    <property type="term" value="P:establishment of localization in cell"/>
    <property type="evidence" value="ECO:0000315"/>
    <property type="project" value="MGI"/>
</dbReference>
<dbReference type="GO" id="GO:0010761">
    <property type="term" value="P:fibroblast migration"/>
    <property type="evidence" value="ECO:0000316"/>
    <property type="project" value="MGI"/>
</dbReference>
<dbReference type="GO" id="GO:0022612">
    <property type="term" value="P:gland morphogenesis"/>
    <property type="evidence" value="ECO:0007669"/>
    <property type="project" value="Ensembl"/>
</dbReference>
<dbReference type="GO" id="GO:0034635">
    <property type="term" value="P:glutathione transport"/>
    <property type="evidence" value="ECO:0000315"/>
    <property type="project" value="UniProtKB"/>
</dbReference>
<dbReference type="GO" id="GO:0030643">
    <property type="term" value="P:intracellular phosphate ion homeostasis"/>
    <property type="evidence" value="ECO:0000315"/>
    <property type="project" value="MGI"/>
</dbReference>
<dbReference type="GO" id="GO:0045199">
    <property type="term" value="P:maintenance of epithelial cell apical/basal polarity"/>
    <property type="evidence" value="ECO:0000315"/>
    <property type="project" value="ARUK-UCL"/>
</dbReference>
<dbReference type="GO" id="GO:0030033">
    <property type="term" value="P:microvillus assembly"/>
    <property type="evidence" value="ECO:0007669"/>
    <property type="project" value="Ensembl"/>
</dbReference>
<dbReference type="GO" id="GO:0090090">
    <property type="term" value="P:negative regulation of canonical Wnt signaling pathway"/>
    <property type="evidence" value="ECO:0007669"/>
    <property type="project" value="Ensembl"/>
</dbReference>
<dbReference type="GO" id="GO:2000146">
    <property type="term" value="P:negative regulation of cell motility"/>
    <property type="evidence" value="ECO:0000315"/>
    <property type="project" value="UniProtKB"/>
</dbReference>
<dbReference type="GO" id="GO:0008285">
    <property type="term" value="P:negative regulation of cell population proliferation"/>
    <property type="evidence" value="ECO:0007669"/>
    <property type="project" value="Ensembl"/>
</dbReference>
<dbReference type="GO" id="GO:0070373">
    <property type="term" value="P:negative regulation of ERK1 and ERK2 cascade"/>
    <property type="evidence" value="ECO:0007669"/>
    <property type="project" value="Ensembl"/>
</dbReference>
<dbReference type="GO" id="GO:0010764">
    <property type="term" value="P:negative regulation of fibroblast migration"/>
    <property type="evidence" value="ECO:0000316"/>
    <property type="project" value="MGI"/>
</dbReference>
<dbReference type="GO" id="GO:0045930">
    <property type="term" value="P:negative regulation of mitotic cell cycle"/>
    <property type="evidence" value="ECO:0007669"/>
    <property type="project" value="Ensembl"/>
</dbReference>
<dbReference type="GO" id="GO:0051898">
    <property type="term" value="P:negative regulation of phosphatidylinositol 3-kinase/protein kinase B signal transduction"/>
    <property type="evidence" value="ECO:0000315"/>
    <property type="project" value="UniProtKB"/>
</dbReference>
<dbReference type="GO" id="GO:0010642">
    <property type="term" value="P:negative regulation of platelet-derived growth factor receptor signaling pathway"/>
    <property type="evidence" value="ECO:0000315"/>
    <property type="project" value="UniProtKB"/>
</dbReference>
<dbReference type="GO" id="GO:0010766">
    <property type="term" value="P:negative regulation of sodium ion transport"/>
    <property type="evidence" value="ECO:0000315"/>
    <property type="project" value="MGI"/>
</dbReference>
<dbReference type="GO" id="GO:0007097">
    <property type="term" value="P:nuclear migration"/>
    <property type="evidence" value="ECO:0007669"/>
    <property type="project" value="Ensembl"/>
</dbReference>
<dbReference type="GO" id="GO:0060158">
    <property type="term" value="P:phospholipase C-activating dopamine receptor signaling pathway"/>
    <property type="evidence" value="ECO:0000315"/>
    <property type="project" value="MGI"/>
</dbReference>
<dbReference type="GO" id="GO:0007009">
    <property type="term" value="P:plasma membrane organization"/>
    <property type="evidence" value="ECO:0000315"/>
    <property type="project" value="ARUK-UCL"/>
</dbReference>
<dbReference type="GO" id="GO:2001244">
    <property type="term" value="P:positive regulation of intrinsic apoptotic signaling pathway"/>
    <property type="evidence" value="ECO:0007669"/>
    <property type="project" value="Ensembl"/>
</dbReference>
<dbReference type="GO" id="GO:0008104">
    <property type="term" value="P:protein localization"/>
    <property type="evidence" value="ECO:0000315"/>
    <property type="project" value="MGI"/>
</dbReference>
<dbReference type="GO" id="GO:0072659">
    <property type="term" value="P:protein localization to plasma membrane"/>
    <property type="evidence" value="ECO:0007669"/>
    <property type="project" value="Ensembl"/>
</dbReference>
<dbReference type="GO" id="GO:0008360">
    <property type="term" value="P:regulation of cell shape"/>
    <property type="evidence" value="ECO:0007669"/>
    <property type="project" value="Ensembl"/>
</dbReference>
<dbReference type="GO" id="GO:0008361">
    <property type="term" value="P:regulation of cell size"/>
    <property type="evidence" value="ECO:0007669"/>
    <property type="project" value="Ensembl"/>
</dbReference>
<dbReference type="GO" id="GO:0045859">
    <property type="term" value="P:regulation of protein kinase activity"/>
    <property type="evidence" value="ECO:0000315"/>
    <property type="project" value="UniProtKB"/>
</dbReference>
<dbReference type="GO" id="GO:1903402">
    <property type="term" value="P:regulation of renal phosphate excretion"/>
    <property type="evidence" value="ECO:0000315"/>
    <property type="project" value="MGI"/>
</dbReference>
<dbReference type="GO" id="GO:0070293">
    <property type="term" value="P:renal absorption"/>
    <property type="evidence" value="ECO:0000315"/>
    <property type="project" value="UniProtKB"/>
</dbReference>
<dbReference type="GO" id="GO:0097291">
    <property type="term" value="P:renal phosphate ion absorption"/>
    <property type="evidence" value="ECO:0000250"/>
    <property type="project" value="UniProtKB"/>
</dbReference>
<dbReference type="GO" id="GO:0003096">
    <property type="term" value="P:renal sodium ion transport"/>
    <property type="evidence" value="ECO:0000315"/>
    <property type="project" value="MGI"/>
</dbReference>
<dbReference type="GO" id="GO:0007605">
    <property type="term" value="P:sensory perception of sound"/>
    <property type="evidence" value="ECO:0000315"/>
    <property type="project" value="MGI"/>
</dbReference>
<dbReference type="GO" id="GO:0006814">
    <property type="term" value="P:sodium ion transport"/>
    <property type="evidence" value="ECO:0000315"/>
    <property type="project" value="MGI"/>
</dbReference>
<dbReference type="GO" id="GO:0016055">
    <property type="term" value="P:Wnt signaling pathway"/>
    <property type="evidence" value="ECO:0007669"/>
    <property type="project" value="UniProtKB-KW"/>
</dbReference>
<dbReference type="CDD" id="cd06768">
    <property type="entry name" value="PDZ_NHERF-like"/>
    <property type="match status" value="2"/>
</dbReference>
<dbReference type="FunFam" id="2.30.42.10:FF:000068">
    <property type="entry name" value="Na(+)/H(+) exchange regulatory cofactor NHE-RF"/>
    <property type="match status" value="2"/>
</dbReference>
<dbReference type="Gene3D" id="2.30.42.10">
    <property type="match status" value="2"/>
</dbReference>
<dbReference type="InterPro" id="IPR015098">
    <property type="entry name" value="EBP50_C"/>
</dbReference>
<dbReference type="InterPro" id="IPR051067">
    <property type="entry name" value="NHER"/>
</dbReference>
<dbReference type="InterPro" id="IPR017300">
    <property type="entry name" value="NHERF-1/NHERF-2"/>
</dbReference>
<dbReference type="InterPro" id="IPR001478">
    <property type="entry name" value="PDZ"/>
</dbReference>
<dbReference type="InterPro" id="IPR036034">
    <property type="entry name" value="PDZ_sf"/>
</dbReference>
<dbReference type="PANTHER" id="PTHR14191:SF7">
    <property type="entry name" value="NA(+)_H(+) EXCHANGE REGULATORY COFACTOR NHE-RF1"/>
    <property type="match status" value="1"/>
</dbReference>
<dbReference type="PANTHER" id="PTHR14191">
    <property type="entry name" value="PDZ DOMAIN CONTAINING PROTEIN"/>
    <property type="match status" value="1"/>
</dbReference>
<dbReference type="Pfam" id="PF09007">
    <property type="entry name" value="EBP50_C"/>
    <property type="match status" value="1"/>
</dbReference>
<dbReference type="Pfam" id="PF00595">
    <property type="entry name" value="PDZ"/>
    <property type="match status" value="2"/>
</dbReference>
<dbReference type="PIRSF" id="PIRSF037866">
    <property type="entry name" value="EBP50"/>
    <property type="match status" value="1"/>
</dbReference>
<dbReference type="SMART" id="SM00228">
    <property type="entry name" value="PDZ"/>
    <property type="match status" value="2"/>
</dbReference>
<dbReference type="SUPFAM" id="SSF50156">
    <property type="entry name" value="PDZ domain-like"/>
    <property type="match status" value="2"/>
</dbReference>
<dbReference type="PROSITE" id="PS50106">
    <property type="entry name" value="PDZ"/>
    <property type="match status" value="2"/>
</dbReference>
<sequence>MSADAAAGEPLPRLCCLEKGPNGYGFHLHGEKGKVGQFIRLVEPGSPAEKSGLLAGDRLVEVNGENVEKETHQQVVSRIRAALNAVRLLVVDPETDERLKKLGVSIREELLRPQEKSEQAEPPAAADTHEAGDQNEAEKSHLRELRPRLCTMKKGPNGYGFNLHSDKSKPGQFIRAVDPDSPAEASGLRAQDRIVEVNGVCMEGKQHGDVVSAIKGGGDEAKLLVVDKETDEFFKKCKVIPSQEHLDGPLPEPFSNGEIQKESSREALVEPASESPRPALARSASSDTSEELNSQDSPKRQVSTEPSSTSSSSSDPILDLNISLAVAKERAHQKRSSKRAPQMDWSKKNELFSNL</sequence>
<organism>
    <name type="scientific">Mus musculus</name>
    <name type="common">Mouse</name>
    <dbReference type="NCBI Taxonomy" id="10090"/>
    <lineage>
        <taxon>Eukaryota</taxon>
        <taxon>Metazoa</taxon>
        <taxon>Chordata</taxon>
        <taxon>Craniata</taxon>
        <taxon>Vertebrata</taxon>
        <taxon>Euteleostomi</taxon>
        <taxon>Mammalia</taxon>
        <taxon>Eutheria</taxon>
        <taxon>Euarchontoglires</taxon>
        <taxon>Glires</taxon>
        <taxon>Rodentia</taxon>
        <taxon>Myomorpha</taxon>
        <taxon>Muroidea</taxon>
        <taxon>Muridae</taxon>
        <taxon>Murinae</taxon>
        <taxon>Mus</taxon>
        <taxon>Mus</taxon>
    </lineage>
</organism>
<feature type="initiator methionine" description="Removed" evidence="2">
    <location>
        <position position="1"/>
    </location>
</feature>
<feature type="chain" id="PRO_0000096800" description="Na(+)/H(+) exchange regulatory cofactor NHE-RF1">
    <location>
        <begin position="2"/>
        <end position="355"/>
    </location>
</feature>
<feature type="domain" description="PDZ 1" evidence="4">
    <location>
        <begin position="14"/>
        <end position="94"/>
    </location>
</feature>
<feature type="domain" description="PDZ 2" evidence="4">
    <location>
        <begin position="149"/>
        <end position="229"/>
    </location>
</feature>
<feature type="region of interest" description="Disordered" evidence="5">
    <location>
        <begin position="110"/>
        <end position="146"/>
    </location>
</feature>
<feature type="region of interest" description="Disordered" evidence="5">
    <location>
        <begin position="244"/>
        <end position="355"/>
    </location>
</feature>
<feature type="compositionally biased region" description="Basic and acidic residues" evidence="5">
    <location>
        <begin position="110"/>
        <end position="119"/>
    </location>
</feature>
<feature type="compositionally biased region" description="Basic and acidic residues" evidence="5">
    <location>
        <begin position="127"/>
        <end position="146"/>
    </location>
</feature>
<feature type="compositionally biased region" description="Basic and acidic residues" evidence="5">
    <location>
        <begin position="259"/>
        <end position="268"/>
    </location>
</feature>
<feature type="compositionally biased region" description="Low complexity" evidence="5">
    <location>
        <begin position="270"/>
        <end position="286"/>
    </location>
</feature>
<feature type="compositionally biased region" description="Low complexity" evidence="5">
    <location>
        <begin position="303"/>
        <end position="323"/>
    </location>
</feature>
<feature type="compositionally biased region" description="Basic and acidic residues" evidence="5">
    <location>
        <begin position="345"/>
        <end position="355"/>
    </location>
</feature>
<feature type="modified residue" description="N-acetylserine" evidence="2">
    <location>
        <position position="2"/>
    </location>
</feature>
<feature type="modified residue" description="Phosphoserine" evidence="2">
    <location>
        <position position="2"/>
    </location>
</feature>
<feature type="modified residue" description="Phosphoserine" evidence="2">
    <location>
        <position position="46"/>
    </location>
</feature>
<feature type="modified residue" description="Phosphoserine" evidence="2">
    <location>
        <position position="264"/>
    </location>
</feature>
<feature type="modified residue" description="Phosphoserine" evidence="2">
    <location>
        <position position="275"/>
    </location>
</feature>
<feature type="modified residue" description="Phosphoserine" evidence="3">
    <location>
        <position position="285"/>
    </location>
</feature>
<feature type="modified residue" description="Phosphoserine" evidence="8 14">
    <location>
        <position position="286"/>
    </location>
</feature>
<feature type="modified residue" description="Phosphothreonine" evidence="14">
    <location>
        <position position="288"/>
    </location>
</feature>
<feature type="modified residue" description="Phosphoserine" evidence="13 14">
    <location>
        <position position="289"/>
    </location>
</feature>
<feature type="modified residue" description="Phosphoserine" evidence="14">
    <location>
        <position position="294"/>
    </location>
</feature>
<feature type="modified residue" description="Phosphoserine" evidence="13 14">
    <location>
        <position position="297"/>
    </location>
</feature>
<feature type="splice variant" id="VSP_027877" description="In isoform 2." evidence="12">
    <location>
        <begin position="1"/>
        <end position="317"/>
    </location>
</feature>
<feature type="splice variant" id="VSP_027878" description="In isoform 2." evidence="12">
    <original>L</original>
    <variation>M</variation>
    <location>
        <position position="318"/>
    </location>
</feature>
<name>NHRF1_MOUSE</name>
<comment type="function">
    <text evidence="1 10 11">Scaffold protein that connects plasma membrane proteins with members of the ezrin/moesin/radixin family and thereby helps to link them to the actin cytoskeleton and to regulate their surface expression. Necessary for recycling of internalized ADRB2. Was first known to play a role in the regulation of the activity and subcellular location of SLC9A3. Necessary for cAMP-mediated phosphorylation and inhibition of SLC9A3. May enhance Wnt signaling (By similarity). May participate in HTR4 targeting to microvilli. Involved in the regulation of phosphate reabsorption in the renal proximal tubules (By similarity). Involved in sperm capacitation. May participate in the regulation of the chloride and bicarbonate homeostasis in spermatozoa.</text>
</comment>
<comment type="subunit">
    <text evidence="2 6 7 9 10 11">Homodimer, and heterodimer with NHERF2. Binds the N-termini of EZR, RDX and MSN. Binds the C-termini of PDGFRA, PDGFRB, ADRB2 and NOS2. Binds ARHGAP17, EPI64, RACK1, OPRK1, GNAQ, CTNNB1, PLCB3 and CLCN3. Forms a complex with CFTR and SLC4A7. Forms a complex with SLC4A7 and ATP6V1B1 (By similarity). Binds PDZK1. Binds the C-terminus of PAG1. In resting T-cells, part of a PAG1-NHERF1-MSN complex which is disrupted upon TCR activation. Directly interacts with HTR4. Interacts with MCC (By similarity). Interacts with TRPC4 (via the PDZ-binding domain) (By similarity). Interacts (via the PDZ 1 domain) with PODXL (via the C-terminal PDZ-binding motif DTHL); interaction is not detected in glomerular epithelium cells (By similarity). Interacts (via the PDZ 1 domain) with PODXL (via the C-terminal PDZ-binding motif DTHL); the interaction take place early in the secretory pathway and is necessary for its apical membrane sorting (By similarity). Interacts with SLC34A1 (By similarity). Interacts with CFTR, SLC26A3 and SLC26A6. Interacts (via PDZ domains) with ACE2 (via PDZ-binding motif); the interaction may enhance ACE2 membrane residence (By similarity).</text>
</comment>
<comment type="interaction">
    <interactant intactId="EBI-1184085">
        <id>P70441</id>
    </interactant>
    <interactant intactId="EBI-6115317">
        <id>P26361</id>
        <label>Cftr</label>
    </interactant>
    <organismsDiffer>false</organismsDiffer>
    <experiments>3</experiments>
</comment>
<comment type="interaction">
    <interactant intactId="EBI-1184085">
        <id>P70441</id>
    </interactant>
    <interactant intactId="EBI-6895537">
        <id>Q9WVC8</id>
        <label>Slc26a3</label>
    </interactant>
    <organismsDiffer>false</organismsDiffer>
    <experiments>2</experiments>
</comment>
<comment type="interaction">
    <interactant intactId="EBI-1184085">
        <id>P70441</id>
    </interactant>
    <interactant intactId="EBI-6895517">
        <id>Q8CIW6</id>
        <label>Slc26a6</label>
    </interactant>
    <organismsDiffer>false</organismsDiffer>
    <experiments>2</experiments>
</comment>
<comment type="interaction">
    <interactant intactId="EBI-1184085">
        <id>P70441</id>
    </interactant>
    <interactant intactId="EBI-8613086">
        <id>Q80ZA5-3</id>
        <label>Slc4a10</label>
    </interactant>
    <organismsDiffer>true</organismsDiffer>
    <experiments>3</experiments>
</comment>
<comment type="subcellular location">
    <subcellularLocation>
        <location>Cytoplasm</location>
    </subcellularLocation>
    <subcellularLocation>
        <location>Apical cell membrane</location>
    </subcellularLocation>
    <subcellularLocation>
        <location evidence="1">Cell projection</location>
        <location evidence="1">Filopodium</location>
    </subcellularLocation>
    <subcellularLocation>
        <location evidence="1">Cell projection</location>
        <location evidence="1">Ruffle</location>
    </subcellularLocation>
    <subcellularLocation>
        <location evidence="1">Cell projection</location>
        <location evidence="1">Microvillus</location>
    </subcellularLocation>
    <subcellularLocation>
        <location evidence="1">Endomembrane system</location>
        <topology evidence="1">Peripheral membrane protein</topology>
    </subcellularLocation>
    <text evidence="1">Colocalizes with actin in microvilli-rich apical regions of the syncytiotrophoblast. Present in lipid rafts of T-cells (By similarity). Translocates from the cytoplasm to the apical cell membrane in a PODXL-dependent manner. Colocalizes with CFTR at the midpiece of sperm tail.</text>
</comment>
<comment type="alternative products">
    <event type="alternative splicing"/>
    <isoform>
        <id>P70441-1</id>
        <name>1</name>
        <sequence type="displayed"/>
    </isoform>
    <isoform>
        <id>P70441-2</id>
        <name>2</name>
        <sequence type="described" ref="VSP_027877 VSP_027878"/>
    </isoform>
</comment>
<comment type="tissue specificity">
    <text evidence="10">Expressed in spermatogenic cells.</text>
</comment>